<proteinExistence type="evidence at protein level"/>
<name>PLCB3_HUMAN</name>
<evidence type="ECO:0000250" key="1"/>
<evidence type="ECO:0000250" key="2">
    <source>
        <dbReference type="UniProtKB" id="P51432"/>
    </source>
</evidence>
<evidence type="ECO:0000250" key="3">
    <source>
        <dbReference type="UniProtKB" id="Q99JE6"/>
    </source>
</evidence>
<evidence type="ECO:0000255" key="4">
    <source>
        <dbReference type="PROSITE-ProRule" id="PRU00041"/>
    </source>
</evidence>
<evidence type="ECO:0000255" key="5">
    <source>
        <dbReference type="PROSITE-ProRule" id="PRU00270"/>
    </source>
</evidence>
<evidence type="ECO:0000255" key="6">
    <source>
        <dbReference type="PROSITE-ProRule" id="PRU00271"/>
    </source>
</evidence>
<evidence type="ECO:0000256" key="7">
    <source>
        <dbReference type="SAM" id="MobiDB-lite"/>
    </source>
</evidence>
<evidence type="ECO:0000269" key="8">
    <source>
    </source>
</evidence>
<evidence type="ECO:0000269" key="9">
    <source>
    </source>
</evidence>
<evidence type="ECO:0000269" key="10">
    <source>
    </source>
</evidence>
<evidence type="ECO:0000269" key="11">
    <source>
    </source>
</evidence>
<evidence type="ECO:0000269" key="12">
    <source>
    </source>
</evidence>
<evidence type="ECO:0000303" key="13">
    <source>
    </source>
</evidence>
<evidence type="ECO:0000303" key="14">
    <source>
    </source>
</evidence>
<evidence type="ECO:0000305" key="15"/>
<evidence type="ECO:0000305" key="16">
    <source>
    </source>
</evidence>
<evidence type="ECO:0000305" key="17">
    <source>
    </source>
</evidence>
<evidence type="ECO:0000305" key="18">
    <source>
    </source>
</evidence>
<evidence type="ECO:0000312" key="19">
    <source>
        <dbReference type="EMBL" id="AAA77683.1"/>
    </source>
</evidence>
<evidence type="ECO:0007744" key="20">
    <source>
        <dbReference type="PDB" id="7SQ2"/>
    </source>
</evidence>
<evidence type="ECO:0007744" key="21">
    <source>
        <dbReference type="PDB" id="8UQN"/>
    </source>
</evidence>
<evidence type="ECO:0007744" key="22">
    <source>
        <dbReference type="PDB" id="8UQO"/>
    </source>
</evidence>
<evidence type="ECO:0007744" key="23">
    <source>
    </source>
</evidence>
<evidence type="ECO:0007744" key="24">
    <source>
    </source>
</evidence>
<evidence type="ECO:0007744" key="25">
    <source>
    </source>
</evidence>
<evidence type="ECO:0007744" key="26">
    <source>
    </source>
</evidence>
<evidence type="ECO:0007744" key="27">
    <source>
    </source>
</evidence>
<evidence type="ECO:0007829" key="28">
    <source>
        <dbReference type="PDB" id="4QJ3"/>
    </source>
</evidence>
<evidence type="ECO:0007829" key="29">
    <source>
        <dbReference type="PDB" id="4QJ4"/>
    </source>
</evidence>
<evidence type="ECO:0007829" key="30">
    <source>
        <dbReference type="PDB" id="4QJ5"/>
    </source>
</evidence>
<evidence type="ECO:0007829" key="31">
    <source>
        <dbReference type="PDB" id="7SQ2"/>
    </source>
</evidence>
<evidence type="ECO:0007829" key="32">
    <source>
        <dbReference type="PDB" id="8EMW"/>
    </source>
</evidence>
<evidence type="ECO:0007829" key="33">
    <source>
        <dbReference type="PDB" id="8EMX"/>
    </source>
</evidence>
<protein>
    <recommendedName>
        <fullName evidence="15">1-phosphatidylinositol 4,5-bisphosphate phosphodiesterase beta-3</fullName>
        <ecNumber evidence="9 11 12">3.1.4.11</ecNumber>
    </recommendedName>
    <alternativeName>
        <fullName>Phosphoinositide phospholipase C-beta-3</fullName>
    </alternativeName>
    <alternativeName>
        <fullName>Phospholipase C-beta-3</fullName>
        <shortName>PLC-beta-3</shortName>
    </alternativeName>
</protein>
<keyword id="KW-0002">3D-structure</keyword>
<keyword id="KW-0007">Acetylation</keyword>
<keyword id="KW-0025">Alternative splicing</keyword>
<keyword id="KW-0106">Calcium</keyword>
<keyword id="KW-0963">Cytoplasm</keyword>
<keyword id="KW-0242">Dwarfism</keyword>
<keyword id="KW-0378">Hydrolase</keyword>
<keyword id="KW-0442">Lipid degradation</keyword>
<keyword id="KW-0443">Lipid metabolism</keyword>
<keyword id="KW-0472">Membrane</keyword>
<keyword id="KW-0539">Nucleus</keyword>
<keyword id="KW-0597">Phosphoprotein</keyword>
<keyword id="KW-1267">Proteomics identification</keyword>
<keyword id="KW-1185">Reference proteome</keyword>
<keyword id="KW-0807">Transducer</keyword>
<sequence>MAGAQPGVHALQLEPPTVVETLRRGSKFIKWDEETSSRNLVTLRVDPNGFFLYWTGPNMEVDTLDISSIRDTRTGRYARLPKDPKIREVLGFGGPDARLEEKLMTVVSGPDPVNTVFLNFMAVQDDTAKVWSEELFKLAMNILAQNASRNTFLRKAYTKLKLQVNQDGRIPVKNILKMFSADKKRVETALESCGLKFNRSESIRPDEFSLEIFERFLNKLCLRPDIDKILLEIGAKGKPYLTLEQLMDFINQKQRDPRLNEVLYPPLRPSQARLLIEKYEPNQQFLERDQMSMEGFSRYLGGEENGILPLEALDLSTDMTQPLSAYFINSSHNTYLTAGQLAGTSSVEMYRQALLWGCRCVELDVWKGRPPEEEPFITHGFTMTTEVPLRDVLEAIAETAFKTSPYPVILSFENHVDSAKQQAKMAEYCRSIFGDALLIEPLDKYPLAPGVPLPSPQDLMGRILVKNKKRHRPSAGGPDSAGRKRPLEQSNSALSESSAATEPSSPQLGSPSSDSCPGLSNGEEVGLEKPSLEPQKSLGDEGLNRGPYVLGPADREDEEEDEEEEEQTDPKKPTTDEGTASSEVNATEEMSTLVNYIEPVKFKSFEAARKRNKCFEMSSFVETKAMEQLTKSPMEFVEYNKQQLSRIYPKGTRVDSSNYMPQLFWNVGCQLVALNFQTLDVAMQLNAGVFEYNGRSGYLLKPEFMRRPDKSFDPFTEVIVDGIVANALRVKVISGQFLSDRKVGIYVEVDMFGLPVDTRRKYRTRTSQGNSFNPVWDEEPFDFPKVVLPTLASLRIAAFEEGGKFVGHRILPVSAIRSGYHYVCLRNEANQPLCLPALLIYTEASDYIPDDHQDYAEALINPIKHVSLMDQRARQLAALIGESEAQAGQETCQDTQSQQLGSQPSSNPTPSPLDASPRRPPGPTTSPASTSLSSPGQRDDLIASILSEVAPTPLDELRGHKALVKLRSRQERDLRELRKKHQRKAVTLTRRLLDGLAQAQAEGRCRLRPGALGGAADVEDTKEGEDEAKRYQEFQNRQVQSLLELREAQVDAEAQRRLEHLRQALQRLREVVLDANTTQFKRLKEMNEREKKELQKILDRKRHNSISEAKMRDKHKKEAELTEINRRHITESVNSIRRLEEAQKQRHDRLVAGQQQVLQQLAEEEPKLLAQLAQECQEQRARLPQEIRRSLLGEMPEGLGDGPLVACASNGHAPGSSGHLSGADSESQEENTQL</sequence>
<feature type="initiator methionine" description="Removed" evidence="25">
    <location>
        <position position="1"/>
    </location>
</feature>
<feature type="chain" id="PRO_0000088491" description="1-phosphatidylinositol 4,5-bisphosphate phosphodiesterase beta-3">
    <location>
        <begin position="2"/>
        <end position="1234"/>
    </location>
</feature>
<feature type="domain" description="PI-PLC X-box" evidence="5">
    <location>
        <begin position="318"/>
        <end position="468"/>
    </location>
</feature>
<feature type="domain" description="PI-PLC Y-box" evidence="6">
    <location>
        <begin position="590"/>
        <end position="706"/>
    </location>
</feature>
<feature type="domain" description="C2" evidence="4">
    <location>
        <begin position="707"/>
        <end position="835"/>
    </location>
</feature>
<feature type="region of interest" description="Disordered" evidence="7">
    <location>
        <begin position="467"/>
        <end position="587"/>
    </location>
</feature>
<feature type="region of interest" description="Disordered" evidence="7">
    <location>
        <begin position="887"/>
        <end position="937"/>
    </location>
</feature>
<feature type="region of interest" description="Disordered" evidence="7">
    <location>
        <begin position="1198"/>
        <end position="1234"/>
    </location>
</feature>
<feature type="region of interest" description="Interaction with SHANK2" evidence="1">
    <location>
        <begin position="1231"/>
        <end position="1234"/>
    </location>
</feature>
<feature type="compositionally biased region" description="Low complexity" evidence="7">
    <location>
        <begin position="488"/>
        <end position="515"/>
    </location>
</feature>
<feature type="compositionally biased region" description="Acidic residues" evidence="7">
    <location>
        <begin position="555"/>
        <end position="567"/>
    </location>
</feature>
<feature type="compositionally biased region" description="Polar residues" evidence="7">
    <location>
        <begin position="576"/>
        <end position="587"/>
    </location>
</feature>
<feature type="compositionally biased region" description="Polar residues" evidence="7">
    <location>
        <begin position="887"/>
        <end position="908"/>
    </location>
</feature>
<feature type="compositionally biased region" description="Low complexity" evidence="7">
    <location>
        <begin position="925"/>
        <end position="936"/>
    </location>
</feature>
<feature type="active site" evidence="5">
    <location>
        <position position="332"/>
    </location>
</feature>
<feature type="active site" evidence="5">
    <location>
        <position position="379"/>
    </location>
</feature>
<feature type="modified residue" description="N-acetylalanine" evidence="25">
    <location>
        <position position="2"/>
    </location>
</feature>
<feature type="modified residue" description="Phosphoserine" evidence="24">
    <location>
        <position position="474"/>
    </location>
</feature>
<feature type="modified residue" description="Phosphoserine" evidence="27">
    <location>
        <position position="490"/>
    </location>
</feature>
<feature type="modified residue" description="Phosphoserine" evidence="27">
    <location>
        <position position="495"/>
    </location>
</feature>
<feature type="modified residue" description="Phosphoserine" evidence="23 24 26 27">
    <location>
        <position position="537"/>
    </location>
</feature>
<feature type="modified residue" description="Phosphoserine" evidence="26">
    <location>
        <position position="926"/>
    </location>
</feature>
<feature type="modified residue" description="Phosphoserine" evidence="24">
    <location>
        <position position="1105"/>
    </location>
</feature>
<feature type="splice variant" id="VSP_046054" description="In isoform 2." evidence="13">
    <location>
        <begin position="33"/>
        <end position="99"/>
    </location>
</feature>
<feature type="sequence variant" id="VAR_029229" description="In dbSNP:rs12146487.">
    <original>R</original>
    <variation>H</variation>
    <location>
        <position position="483"/>
    </location>
</feature>
<feature type="sequence variant" id="VAR_084509" description="In SMDCD; strong reduction in protein levels and marked increase in cellular phosphatidylinositol 4,5 bisphosphate levels in patient cells." evidence="10">
    <original>A</original>
    <variation>S</variation>
    <location>
        <position position="878"/>
    </location>
</feature>
<feature type="mutagenesis site" description="Reduced ability to promote the GTPase activity of G(q)/G(11) G alpha proteins." evidence="9">
    <original>R</original>
    <variation>Q</variation>
    <location>
        <position position="258"/>
    </location>
</feature>
<feature type="mutagenesis site" description="Reduced ability to promote the GTPase activity of G(q)/G(11) G alpha proteins." evidence="9">
    <original>N</original>
    <variation>A</variation>
    <location>
        <position position="260"/>
    </location>
</feature>
<feature type="mutagenesis site" description="Abolished ability to transduce G(q)/G(11) G alpha signaling." evidence="9">
    <original>Y</original>
    <variation>A</variation>
    <location>
        <position position="855"/>
    </location>
</feature>
<feature type="mutagenesis site" description="Abolished ability to transduce G(q)/G(11) G alpha signaling without affecting the phospholipase activity." evidence="9">
    <original>L</original>
    <variation>A</variation>
    <location>
        <position position="859"/>
    </location>
</feature>
<feature type="mutagenesis site" description="Abolished ability to transduce G(q)/G(11) G alpha signaling." evidence="9">
    <original>N</original>
    <variation>A</variation>
    <location>
        <position position="861"/>
    </location>
</feature>
<feature type="mutagenesis site" description="Abolished ability to transduce G(q)/G(11) G alpha signaling." evidence="9">
    <original>P</original>
    <variation>A</variation>
    <location>
        <position position="862"/>
    </location>
</feature>
<feature type="mutagenesis site" description="Abolished ability to transduce G(q)/G(11) G alpha signaling." evidence="9">
    <original>I</original>
    <variation>A</variation>
    <location>
        <position position="863"/>
    </location>
</feature>
<feature type="sequence conflict" description="In Ref. 6; CAA78903." evidence="15" ref="6">
    <original>S</original>
    <variation>L</variation>
    <location>
        <position position="845"/>
    </location>
</feature>
<feature type="sequence conflict" description="In Ref. 2; CAA85776." evidence="15" ref="2">
    <original>G</original>
    <variation>E</variation>
    <location>
        <position position="881"/>
    </location>
</feature>
<feature type="sequence conflict" description="In Ref. 2; CAA85776." evidence="15" ref="2">
    <original>REKKELQKILDRKRHNSISEAKMRDKHKKEA</original>
    <variation>SWPSWPRSVRSSGRGSPRRSAGACWARCRRG</variation>
    <location>
        <begin position="1089"/>
        <end position="1119"/>
    </location>
</feature>
<feature type="helix" evidence="31">
    <location>
        <begin position="20"/>
        <end position="24"/>
    </location>
</feature>
<feature type="strand" evidence="31">
    <location>
        <begin position="26"/>
        <end position="30"/>
    </location>
</feature>
<feature type="strand" evidence="28">
    <location>
        <begin position="33"/>
        <end position="35"/>
    </location>
</feature>
<feature type="strand" evidence="31">
    <location>
        <begin position="39"/>
        <end position="45"/>
    </location>
</feature>
<feature type="strand" evidence="31">
    <location>
        <begin position="51"/>
        <end position="55"/>
    </location>
</feature>
<feature type="strand" evidence="31">
    <location>
        <begin position="57"/>
        <end position="59"/>
    </location>
</feature>
<feature type="strand" evidence="31">
    <location>
        <begin position="61"/>
        <end position="65"/>
    </location>
</feature>
<feature type="helix" evidence="31">
    <location>
        <begin position="66"/>
        <end position="68"/>
    </location>
</feature>
<feature type="strand" evidence="31">
    <location>
        <begin position="69"/>
        <end position="74"/>
    </location>
</feature>
<feature type="helix" evidence="31">
    <location>
        <begin position="75"/>
        <end position="77"/>
    </location>
</feature>
<feature type="helix" evidence="28">
    <location>
        <begin position="84"/>
        <end position="90"/>
    </location>
</feature>
<feature type="helix" evidence="28">
    <location>
        <begin position="97"/>
        <end position="101"/>
    </location>
</feature>
<feature type="strand" evidence="31">
    <location>
        <begin position="104"/>
        <end position="108"/>
    </location>
</feature>
<feature type="strand" evidence="31">
    <location>
        <begin position="110"/>
        <end position="114"/>
    </location>
</feature>
<feature type="strand" evidence="31">
    <location>
        <begin position="116"/>
        <end position="125"/>
    </location>
</feature>
<feature type="helix" evidence="31">
    <location>
        <begin position="128"/>
        <end position="139"/>
    </location>
</feature>
<feature type="helix" evidence="31">
    <location>
        <begin position="142"/>
        <end position="145"/>
    </location>
</feature>
<feature type="helix" evidence="31">
    <location>
        <begin position="149"/>
        <end position="162"/>
    </location>
</feature>
<feature type="strand" evidence="33">
    <location>
        <begin position="166"/>
        <end position="168"/>
    </location>
</feature>
<feature type="helix" evidence="31">
    <location>
        <begin position="173"/>
        <end position="178"/>
    </location>
</feature>
<feature type="turn" evidence="31">
    <location>
        <begin position="179"/>
        <end position="181"/>
    </location>
</feature>
<feature type="helix" evidence="31">
    <location>
        <begin position="183"/>
        <end position="192"/>
    </location>
</feature>
<feature type="strand" evidence="33">
    <location>
        <begin position="198"/>
        <end position="200"/>
    </location>
</feature>
<feature type="helix" evidence="31">
    <location>
        <begin position="205"/>
        <end position="207"/>
    </location>
</feature>
<feature type="helix" evidence="31">
    <location>
        <begin position="210"/>
        <end position="220"/>
    </location>
</feature>
<feature type="helix" evidence="31">
    <location>
        <begin position="224"/>
        <end position="232"/>
    </location>
</feature>
<feature type="strand" evidence="31">
    <location>
        <begin position="240"/>
        <end position="242"/>
    </location>
</feature>
<feature type="helix" evidence="31">
    <location>
        <begin position="243"/>
        <end position="252"/>
    </location>
</feature>
<feature type="turn" evidence="31">
    <location>
        <begin position="261"/>
        <end position="263"/>
    </location>
</feature>
<feature type="helix" evidence="31">
    <location>
        <begin position="269"/>
        <end position="279"/>
    </location>
</feature>
<feature type="helix" evidence="31">
    <location>
        <begin position="283"/>
        <end position="287"/>
    </location>
</feature>
<feature type="strand" evidence="31">
    <location>
        <begin position="290"/>
        <end position="292"/>
    </location>
</feature>
<feature type="helix" evidence="31">
    <location>
        <begin position="293"/>
        <end position="300"/>
    </location>
</feature>
<feature type="strand" evidence="31">
    <location>
        <begin position="302"/>
        <end position="305"/>
    </location>
</feature>
<feature type="helix" evidence="31">
    <location>
        <begin position="310"/>
        <end position="313"/>
    </location>
</feature>
<feature type="helix" evidence="31">
    <location>
        <begin position="323"/>
        <end position="325"/>
    </location>
</feature>
<feature type="strand" evidence="31">
    <location>
        <begin position="326"/>
        <end position="328"/>
    </location>
</feature>
<feature type="strand" evidence="31">
    <location>
        <begin position="330"/>
        <end position="333"/>
    </location>
</feature>
<feature type="strand" evidence="31">
    <location>
        <begin position="336"/>
        <end position="338"/>
    </location>
</feature>
<feature type="strand" evidence="31">
    <location>
        <begin position="340"/>
        <end position="342"/>
    </location>
</feature>
<feature type="helix" evidence="31">
    <location>
        <begin position="348"/>
        <end position="355"/>
    </location>
</feature>
<feature type="strand" evidence="31">
    <location>
        <begin position="360"/>
        <end position="365"/>
    </location>
</feature>
<feature type="strand" evidence="31">
    <location>
        <begin position="370"/>
        <end position="372"/>
    </location>
</feature>
<feature type="strand" evidence="31">
    <location>
        <begin position="380"/>
        <end position="382"/>
    </location>
</feature>
<feature type="helix" evidence="31">
    <location>
        <begin position="389"/>
        <end position="399"/>
    </location>
</feature>
<feature type="turn" evidence="31">
    <location>
        <begin position="400"/>
        <end position="402"/>
    </location>
</feature>
<feature type="strand" evidence="31">
    <location>
        <begin position="408"/>
        <end position="414"/>
    </location>
</feature>
<feature type="helix" evidence="31">
    <location>
        <begin position="419"/>
        <end position="433"/>
    </location>
</feature>
<feature type="helix" evidence="31">
    <location>
        <begin position="434"/>
        <end position="436"/>
    </location>
</feature>
<feature type="strand" evidence="28">
    <location>
        <begin position="443"/>
        <end position="445"/>
    </location>
</feature>
<feature type="helix" evidence="31">
    <location>
        <begin position="457"/>
        <end position="459"/>
    </location>
</feature>
<feature type="strand" evidence="31">
    <location>
        <begin position="463"/>
        <end position="467"/>
    </location>
</feature>
<feature type="helix" evidence="31">
    <location>
        <begin position="578"/>
        <end position="581"/>
    </location>
</feature>
<feature type="helix" evidence="31">
    <location>
        <begin position="588"/>
        <end position="591"/>
    </location>
</feature>
<feature type="strand" evidence="31">
    <location>
        <begin position="594"/>
        <end position="599"/>
    </location>
</feature>
<feature type="helix" evidence="31">
    <location>
        <begin position="605"/>
        <end position="611"/>
    </location>
</feature>
<feature type="strand" evidence="31">
    <location>
        <begin position="616"/>
        <end position="621"/>
    </location>
</feature>
<feature type="helix" evidence="31">
    <location>
        <begin position="622"/>
        <end position="631"/>
    </location>
</feature>
<feature type="helix" evidence="31">
    <location>
        <begin position="633"/>
        <end position="640"/>
    </location>
</feature>
<feature type="strand" evidence="31">
    <location>
        <begin position="645"/>
        <end position="648"/>
    </location>
</feature>
<feature type="helix" evidence="31">
    <location>
        <begin position="662"/>
        <end position="665"/>
    </location>
</feature>
<feature type="turn" evidence="31">
    <location>
        <begin position="666"/>
        <end position="668"/>
    </location>
</feature>
<feature type="strand" evidence="31">
    <location>
        <begin position="670"/>
        <end position="672"/>
    </location>
</feature>
<feature type="strand" evidence="32">
    <location>
        <begin position="676"/>
        <end position="678"/>
    </location>
</feature>
<feature type="helix" evidence="31">
    <location>
        <begin position="681"/>
        <end position="691"/>
    </location>
</feature>
<feature type="helix" evidence="31">
    <location>
        <begin position="693"/>
        <end position="695"/>
    </location>
</feature>
<feature type="strand" evidence="31">
    <location>
        <begin position="697"/>
        <end position="700"/>
    </location>
</feature>
<feature type="helix" evidence="31">
    <location>
        <begin position="703"/>
        <end position="705"/>
    </location>
</feature>
<feature type="strand" evidence="31">
    <location>
        <begin position="726"/>
        <end position="737"/>
    </location>
</feature>
<feature type="strand" evidence="28">
    <location>
        <begin position="740"/>
        <end position="742"/>
    </location>
</feature>
<feature type="strand" evidence="31">
    <location>
        <begin position="745"/>
        <end position="754"/>
    </location>
</feature>
<feature type="helix" evidence="31">
    <location>
        <begin position="755"/>
        <end position="757"/>
    </location>
</feature>
<feature type="strand" evidence="29">
    <location>
        <begin position="759"/>
        <end position="763"/>
    </location>
</feature>
<feature type="strand" evidence="31">
    <location>
        <begin position="771"/>
        <end position="773"/>
    </location>
</feature>
<feature type="strand" evidence="31">
    <location>
        <begin position="781"/>
        <end position="787"/>
    </location>
</feature>
<feature type="helix" evidence="31">
    <location>
        <begin position="789"/>
        <end position="791"/>
    </location>
</feature>
<feature type="strand" evidence="31">
    <location>
        <begin position="793"/>
        <end position="800"/>
    </location>
</feature>
<feature type="strand" evidence="31">
    <location>
        <begin position="805"/>
        <end position="812"/>
    </location>
</feature>
<feature type="turn" evidence="31">
    <location>
        <begin position="813"/>
        <end position="815"/>
    </location>
</feature>
<feature type="strand" evidence="31">
    <location>
        <begin position="819"/>
        <end position="826"/>
    </location>
</feature>
<feature type="strand" evidence="31">
    <location>
        <begin position="832"/>
        <end position="846"/>
    </location>
</feature>
<feature type="helix" evidence="30">
    <location>
        <begin position="850"/>
        <end position="852"/>
    </location>
</feature>
<feature type="helix" evidence="31">
    <location>
        <begin position="853"/>
        <end position="860"/>
    </location>
</feature>
<feature type="helix" evidence="31">
    <location>
        <begin position="862"/>
        <end position="874"/>
    </location>
</feature>
<feature type="helix" evidence="28">
    <location>
        <begin position="877"/>
        <end position="880"/>
    </location>
</feature>
<comment type="function">
    <text evidence="2 9 10 11 12">Catalyzes the production of the second messenger molecules diacylglycerol (DAG) and inositol 1,4,5-trisphosphate (IP3) (PubMed:20966218, PubMed:29122926, PubMed:37991948, PubMed:9188725). Key transducer of G protein-coupled receptor signaling: activated by G(q)/G(11) G alpha proteins downstream of G protein-coupled receptors activation (PubMed:20966218, PubMed:37991948). In neutrophils, participates in a phospholipase C-activating N-formyl peptide-activated GPCR (G protein-coupled receptor) signaling pathway by promoting RASGRP4 activation by DAG, to promote neutrophil functional responses (By similarity).</text>
</comment>
<comment type="catalytic activity">
    <reaction evidence="9 11 12">
        <text>a 1,2-diacyl-sn-glycero-3-phospho-(1D-myo-inositol-4,5-bisphosphate) + H2O = 1D-myo-inositol 1,4,5-trisphosphate + a 1,2-diacyl-sn-glycerol + H(+)</text>
        <dbReference type="Rhea" id="RHEA:33179"/>
        <dbReference type="ChEBI" id="CHEBI:15377"/>
        <dbReference type="ChEBI" id="CHEBI:15378"/>
        <dbReference type="ChEBI" id="CHEBI:17815"/>
        <dbReference type="ChEBI" id="CHEBI:58456"/>
        <dbReference type="ChEBI" id="CHEBI:203600"/>
        <dbReference type="EC" id="3.1.4.11"/>
    </reaction>
    <physiologicalReaction direction="left-to-right" evidence="16 17 18">
        <dbReference type="Rhea" id="RHEA:33180"/>
    </physiologicalReaction>
</comment>
<comment type="catalytic activity">
    <reaction evidence="3">
        <text>a 1,2-diacyl-sn-glycero-3-phospho-(1D-myo-inositol) + H2O = 1D-myo-inositol 1-phosphate + a 1,2-diacyl-sn-glycerol + H(+)</text>
        <dbReference type="Rhea" id="RHEA:43484"/>
        <dbReference type="ChEBI" id="CHEBI:15377"/>
        <dbReference type="ChEBI" id="CHEBI:15378"/>
        <dbReference type="ChEBI" id="CHEBI:17815"/>
        <dbReference type="ChEBI" id="CHEBI:57880"/>
        <dbReference type="ChEBI" id="CHEBI:58433"/>
    </reaction>
    <physiologicalReaction direction="left-to-right" evidence="3">
        <dbReference type="Rhea" id="RHEA:43485"/>
    </physiologicalReaction>
</comment>
<comment type="cofactor">
    <cofactor>
        <name>Ca(2+)</name>
        <dbReference type="ChEBI" id="CHEBI:29108"/>
    </cofactor>
</comment>
<comment type="activity regulation">
    <text evidence="9 11">Activated by G(q)/G(11) G alpha proteins in response to ligand-binding to G protein-coupled receptors.</text>
</comment>
<comment type="subunit">
    <text evidence="3 8">Interacts with SHANK2 (By similarity). Interacts with LPAR2 (PubMed:15143197).</text>
</comment>
<comment type="interaction">
    <interactant intactId="EBI-4289548">
        <id>Q01970</id>
    </interactant>
    <interactant intactId="EBI-771975">
        <id>P21279</id>
        <label>Gnaq</label>
    </interactant>
    <organismsDiffer>true</organismsDiffer>
    <experiments>6</experiments>
</comment>
<comment type="subcellular location">
    <subcellularLocation>
        <location evidence="10">Cytoplasm</location>
    </subcellularLocation>
    <subcellularLocation>
        <location evidence="3">Membrane</location>
    </subcellularLocation>
    <subcellularLocation>
        <location evidence="2">Nucleus</location>
    </subcellularLocation>
    <text evidence="3">And particulate fractions.</text>
</comment>
<comment type="alternative products">
    <event type="alternative splicing"/>
    <isoform>
        <id>Q01970-1</id>
        <name>1</name>
        <sequence type="displayed"/>
    </isoform>
    <isoform>
        <id>Q01970-2</id>
        <name>2</name>
        <sequence type="described" ref="VSP_046054"/>
    </isoform>
</comment>
<comment type="disease" evidence="10">
    <disease id="DI-05885">
        <name>Spondylometaphyseal dysplasia with corneal dystrophy</name>
        <acronym>SMDCD</acronym>
        <description>An autosomal recessive disorder characterized by postnatal growth deficiency, profound limb shortening with proximal and distal segments involvement, narrow chest, radiological abnormalities involving the spine, pelvis and metaphyses, corneal clouding, and intellectual disability.</description>
        <dbReference type="MIM" id="618961"/>
    </disease>
    <text>The disease is caused by variants affecting the gene represented in this entry.</text>
</comment>
<comment type="sequence caution" evidence="15">
    <conflict type="erroneous initiation">
        <sequence resource="EMBL-CDS" id="AAH32659"/>
    </conflict>
    <text>Extended N-terminus.</text>
</comment>
<dbReference type="EC" id="3.1.4.11" evidence="9 11 12"/>
<dbReference type="EMBL" id="U26425">
    <property type="protein sequence ID" value="AAA77683.1"/>
    <property type="molecule type" value="Genomic_DNA"/>
</dbReference>
<dbReference type="EMBL" id="Z37544">
    <property type="protein sequence ID" value="CAA85776.1"/>
    <property type="molecule type" value="Genomic_DNA"/>
</dbReference>
<dbReference type="EMBL" id="Z37545">
    <property type="protein sequence ID" value="CAA85776.1"/>
    <property type="status" value="JOINED"/>
    <property type="molecule type" value="Genomic_DNA"/>
</dbReference>
<dbReference type="EMBL" id="Z37546">
    <property type="protein sequence ID" value="CAA85776.1"/>
    <property type="status" value="JOINED"/>
    <property type="molecule type" value="Genomic_DNA"/>
</dbReference>
<dbReference type="EMBL" id="Z37547">
    <property type="protein sequence ID" value="CAA85776.1"/>
    <property type="status" value="JOINED"/>
    <property type="molecule type" value="Genomic_DNA"/>
</dbReference>
<dbReference type="EMBL" id="Z37548">
    <property type="protein sequence ID" value="CAA85776.1"/>
    <property type="status" value="JOINED"/>
    <property type="molecule type" value="Genomic_DNA"/>
</dbReference>
<dbReference type="EMBL" id="Z37549">
    <property type="protein sequence ID" value="CAA85776.1"/>
    <property type="status" value="JOINED"/>
    <property type="molecule type" value="Genomic_DNA"/>
</dbReference>
<dbReference type="EMBL" id="Z37550">
    <property type="protein sequence ID" value="CAA85776.1"/>
    <property type="status" value="JOINED"/>
    <property type="molecule type" value="Genomic_DNA"/>
</dbReference>
<dbReference type="EMBL" id="Z37551">
    <property type="protein sequence ID" value="CAA85776.1"/>
    <property type="status" value="JOINED"/>
    <property type="molecule type" value="Genomic_DNA"/>
</dbReference>
<dbReference type="EMBL" id="Z37552">
    <property type="protein sequence ID" value="CAA85776.1"/>
    <property type="status" value="JOINED"/>
    <property type="molecule type" value="Genomic_DNA"/>
</dbReference>
<dbReference type="EMBL" id="Z37553">
    <property type="protein sequence ID" value="CAA85776.1"/>
    <property type="status" value="JOINED"/>
    <property type="molecule type" value="Genomic_DNA"/>
</dbReference>
<dbReference type="EMBL" id="Z37554">
    <property type="protein sequence ID" value="CAA85776.1"/>
    <property type="status" value="JOINED"/>
    <property type="molecule type" value="Genomic_DNA"/>
</dbReference>
<dbReference type="EMBL" id="Z37555">
    <property type="protein sequence ID" value="CAA85776.1"/>
    <property type="status" value="JOINED"/>
    <property type="molecule type" value="Genomic_DNA"/>
</dbReference>
<dbReference type="EMBL" id="Z37556">
    <property type="protein sequence ID" value="CAA85776.1"/>
    <property type="status" value="JOINED"/>
    <property type="molecule type" value="Genomic_DNA"/>
</dbReference>
<dbReference type="EMBL" id="Z37557">
    <property type="protein sequence ID" value="CAA85776.1"/>
    <property type="status" value="JOINED"/>
    <property type="molecule type" value="Genomic_DNA"/>
</dbReference>
<dbReference type="EMBL" id="Z37558">
    <property type="protein sequence ID" value="CAA85776.1"/>
    <property type="status" value="JOINED"/>
    <property type="molecule type" value="Genomic_DNA"/>
</dbReference>
<dbReference type="EMBL" id="Z37559">
    <property type="protein sequence ID" value="CAA85776.1"/>
    <property type="status" value="JOINED"/>
    <property type="molecule type" value="Genomic_DNA"/>
</dbReference>
<dbReference type="EMBL" id="Z37560">
    <property type="protein sequence ID" value="CAA85776.1"/>
    <property type="status" value="JOINED"/>
    <property type="molecule type" value="Genomic_DNA"/>
</dbReference>
<dbReference type="EMBL" id="Z37561">
    <property type="protein sequence ID" value="CAA85776.1"/>
    <property type="status" value="JOINED"/>
    <property type="molecule type" value="Genomic_DNA"/>
</dbReference>
<dbReference type="EMBL" id="Z37562">
    <property type="protein sequence ID" value="CAA85776.1"/>
    <property type="status" value="JOINED"/>
    <property type="molecule type" value="Genomic_DNA"/>
</dbReference>
<dbReference type="EMBL" id="Z37564">
    <property type="protein sequence ID" value="CAA85776.1"/>
    <property type="status" value="JOINED"/>
    <property type="molecule type" value="Genomic_DNA"/>
</dbReference>
<dbReference type="EMBL" id="Z37565">
    <property type="protein sequence ID" value="CAA85776.1"/>
    <property type="status" value="JOINED"/>
    <property type="molecule type" value="Genomic_DNA"/>
</dbReference>
<dbReference type="EMBL" id="Z37566">
    <property type="protein sequence ID" value="CAA85776.1"/>
    <property type="status" value="JOINED"/>
    <property type="molecule type" value="Genomic_DNA"/>
</dbReference>
<dbReference type="EMBL" id="Z37567">
    <property type="protein sequence ID" value="CAA85776.1"/>
    <property type="status" value="JOINED"/>
    <property type="molecule type" value="Genomic_DNA"/>
</dbReference>
<dbReference type="EMBL" id="Z37568">
    <property type="protein sequence ID" value="CAA85776.1"/>
    <property type="status" value="JOINED"/>
    <property type="molecule type" value="Genomic_DNA"/>
</dbReference>
<dbReference type="EMBL" id="Z37569">
    <property type="protein sequence ID" value="CAA85776.1"/>
    <property type="status" value="JOINED"/>
    <property type="molecule type" value="Genomic_DNA"/>
</dbReference>
<dbReference type="EMBL" id="Z37570">
    <property type="protein sequence ID" value="CAA85776.1"/>
    <property type="status" value="JOINED"/>
    <property type="molecule type" value="Genomic_DNA"/>
</dbReference>
<dbReference type="EMBL" id="Z37571">
    <property type="protein sequence ID" value="CAA85776.1"/>
    <property type="status" value="JOINED"/>
    <property type="molecule type" value="Genomic_DNA"/>
</dbReference>
<dbReference type="EMBL" id="Z37572">
    <property type="protein sequence ID" value="CAA85776.1"/>
    <property type="status" value="JOINED"/>
    <property type="molecule type" value="Genomic_DNA"/>
</dbReference>
<dbReference type="EMBL" id="Z37573">
    <property type="protein sequence ID" value="CAA85776.1"/>
    <property type="status" value="JOINED"/>
    <property type="molecule type" value="Genomic_DNA"/>
</dbReference>
<dbReference type="EMBL" id="Z37574">
    <property type="protein sequence ID" value="CAA85776.1"/>
    <property type="status" value="JOINED"/>
    <property type="molecule type" value="Genomic_DNA"/>
</dbReference>
<dbReference type="EMBL" id="AP001453">
    <property type="status" value="NOT_ANNOTATED_CDS"/>
    <property type="molecule type" value="Genomic_DNA"/>
</dbReference>
<dbReference type="EMBL" id="CH471076">
    <property type="protein sequence ID" value="EAW74230.1"/>
    <property type="molecule type" value="Genomic_DNA"/>
</dbReference>
<dbReference type="EMBL" id="CH471076">
    <property type="protein sequence ID" value="EAW74231.1"/>
    <property type="molecule type" value="Genomic_DNA"/>
</dbReference>
<dbReference type="EMBL" id="BC032659">
    <property type="protein sequence ID" value="AAH32659.1"/>
    <property type="status" value="ALT_INIT"/>
    <property type="molecule type" value="mRNA"/>
</dbReference>
<dbReference type="EMBL" id="BC142681">
    <property type="protein sequence ID" value="AAI42682.1"/>
    <property type="molecule type" value="mRNA"/>
</dbReference>
<dbReference type="EMBL" id="Z16411">
    <property type="protein sequence ID" value="CAA78903.1"/>
    <property type="molecule type" value="mRNA"/>
</dbReference>
<dbReference type="CCDS" id="CCDS53654.1">
    <molecule id="Q01970-2"/>
</dbReference>
<dbReference type="CCDS" id="CCDS8064.1">
    <molecule id="Q01970-1"/>
</dbReference>
<dbReference type="PIR" id="I38994">
    <property type="entry name" value="I38994"/>
</dbReference>
<dbReference type="PIR" id="S27002">
    <property type="entry name" value="S27002"/>
</dbReference>
<dbReference type="PIR" id="S52099">
    <property type="entry name" value="S52099"/>
</dbReference>
<dbReference type="RefSeq" id="NP_000923.1">
    <molecule id="Q01970-1"/>
    <property type="nucleotide sequence ID" value="NM_000932.5"/>
</dbReference>
<dbReference type="RefSeq" id="NP_001171812.1">
    <molecule id="Q01970-2"/>
    <property type="nucleotide sequence ID" value="NM_001184883.2"/>
</dbReference>
<dbReference type="RefSeq" id="NP_001303243.1">
    <molecule id="Q01970-1"/>
    <property type="nucleotide sequence ID" value="NM_001316314.3"/>
</dbReference>
<dbReference type="PDB" id="4GNK">
    <property type="method" value="X-ray"/>
    <property type="resolution" value="4.00 A"/>
    <property type="chains" value="B/D=10-1234, E=934-1192"/>
</dbReference>
<dbReference type="PDB" id="4QJ3">
    <property type="method" value="X-ray"/>
    <property type="resolution" value="3.00 A"/>
    <property type="chains" value="B=10-891"/>
</dbReference>
<dbReference type="PDB" id="4QJ4">
    <property type="method" value="X-ray"/>
    <property type="resolution" value="3.30 A"/>
    <property type="chains" value="B=10-891"/>
</dbReference>
<dbReference type="PDB" id="4QJ5">
    <property type="method" value="X-ray"/>
    <property type="resolution" value="3.41 A"/>
    <property type="chains" value="B=10-891"/>
</dbReference>
<dbReference type="PDB" id="7SQ2">
    <property type="method" value="X-ray"/>
    <property type="resolution" value="2.60 A"/>
    <property type="chains" value="B=10-886"/>
</dbReference>
<dbReference type="PDB" id="8EMV">
    <property type="method" value="EM"/>
    <property type="resolution" value="3.60 A"/>
    <property type="chains" value="A=10-1234"/>
</dbReference>
<dbReference type="PDB" id="8EMW">
    <property type="method" value="EM"/>
    <property type="resolution" value="3.50 A"/>
    <property type="chains" value="A=10-1234"/>
</dbReference>
<dbReference type="PDB" id="8EMX">
    <property type="method" value="EM"/>
    <property type="resolution" value="3.30 A"/>
    <property type="chains" value="A=9-1234"/>
</dbReference>
<dbReference type="PDB" id="8UQN">
    <property type="method" value="EM"/>
    <property type="resolution" value="3.40 A"/>
    <property type="chains" value="B=10-1234"/>
</dbReference>
<dbReference type="PDB" id="8UQO">
    <property type="method" value="EM"/>
    <property type="resolution" value="3.37 A"/>
    <property type="chains" value="Q=10-1234"/>
</dbReference>
<dbReference type="PDBsum" id="4GNK"/>
<dbReference type="PDBsum" id="4QJ3"/>
<dbReference type="PDBsum" id="4QJ4"/>
<dbReference type="PDBsum" id="4QJ5"/>
<dbReference type="PDBsum" id="7SQ2"/>
<dbReference type="PDBsum" id="8EMV"/>
<dbReference type="PDBsum" id="8EMW"/>
<dbReference type="PDBsum" id="8EMX"/>
<dbReference type="PDBsum" id="8UQN"/>
<dbReference type="PDBsum" id="8UQO"/>
<dbReference type="EMDB" id="EMD-28266"/>
<dbReference type="EMDB" id="EMD-28267"/>
<dbReference type="EMDB" id="EMD-28268"/>
<dbReference type="EMDB" id="EMD-42475"/>
<dbReference type="EMDB" id="EMD-42476"/>
<dbReference type="SMR" id="Q01970"/>
<dbReference type="BioGRID" id="111347">
    <property type="interactions" value="112"/>
</dbReference>
<dbReference type="CORUM" id="Q01970"/>
<dbReference type="DIP" id="DIP-41928N"/>
<dbReference type="FunCoup" id="Q01970">
    <property type="interactions" value="1842"/>
</dbReference>
<dbReference type="IntAct" id="Q01970">
    <property type="interactions" value="44"/>
</dbReference>
<dbReference type="MINT" id="Q01970"/>
<dbReference type="STRING" id="9606.ENSP00000443631"/>
<dbReference type="BindingDB" id="Q01970"/>
<dbReference type="ChEMBL" id="CHEMBL5449"/>
<dbReference type="SwissLipids" id="SLP:000001756"/>
<dbReference type="GlyGen" id="Q01970">
    <property type="glycosylation" value="3 sites, 1 O-linked glycan (1 site)"/>
</dbReference>
<dbReference type="iPTMnet" id="Q01970"/>
<dbReference type="PhosphoSitePlus" id="Q01970"/>
<dbReference type="SwissPalm" id="Q01970"/>
<dbReference type="BioMuta" id="PLCB3"/>
<dbReference type="DMDM" id="1730573"/>
<dbReference type="jPOST" id="Q01970"/>
<dbReference type="MassIVE" id="Q01970"/>
<dbReference type="PaxDb" id="9606-ENSP00000443631"/>
<dbReference type="PeptideAtlas" id="Q01970"/>
<dbReference type="ProteomicsDB" id="33840"/>
<dbReference type="ProteomicsDB" id="58024">
    <molecule id="Q01970-1"/>
</dbReference>
<dbReference type="Pumba" id="Q01970"/>
<dbReference type="Antibodypedia" id="3983">
    <property type="antibodies" value="399 antibodies from 36 providers"/>
</dbReference>
<dbReference type="DNASU" id="5331"/>
<dbReference type="Ensembl" id="ENST00000279230.12">
    <molecule id="Q01970-1"/>
    <property type="protein sequence ID" value="ENSP00000279230.6"/>
    <property type="gene ID" value="ENSG00000149782.13"/>
</dbReference>
<dbReference type="Ensembl" id="ENST00000325234.5">
    <molecule id="Q01970-2"/>
    <property type="protein sequence ID" value="ENSP00000324660.5"/>
    <property type="gene ID" value="ENSG00000149782.13"/>
</dbReference>
<dbReference type="Ensembl" id="ENST00000540288.5">
    <molecule id="Q01970-1"/>
    <property type="protein sequence ID" value="ENSP00000443631.1"/>
    <property type="gene ID" value="ENSG00000149782.13"/>
</dbReference>
<dbReference type="GeneID" id="5331"/>
<dbReference type="KEGG" id="hsa:5331"/>
<dbReference type="MANE-Select" id="ENST00000279230.12">
    <property type="protein sequence ID" value="ENSP00000279230.6"/>
    <property type="RefSeq nucleotide sequence ID" value="NM_000932.5"/>
    <property type="RefSeq protein sequence ID" value="NP_000923.1"/>
</dbReference>
<dbReference type="UCSC" id="uc009ypg.3">
    <molecule id="Q01970-1"/>
    <property type="organism name" value="human"/>
</dbReference>
<dbReference type="AGR" id="HGNC:9056"/>
<dbReference type="CTD" id="5331"/>
<dbReference type="DisGeNET" id="5331"/>
<dbReference type="GeneCards" id="PLCB3"/>
<dbReference type="HGNC" id="HGNC:9056">
    <property type="gene designation" value="PLCB3"/>
</dbReference>
<dbReference type="HPA" id="ENSG00000149782">
    <property type="expression patterns" value="Tissue enhanced (intestine)"/>
</dbReference>
<dbReference type="MalaCards" id="PLCB3"/>
<dbReference type="MIM" id="600230">
    <property type="type" value="gene"/>
</dbReference>
<dbReference type="MIM" id="618961">
    <property type="type" value="phenotype"/>
</dbReference>
<dbReference type="neXtProt" id="NX_Q01970"/>
<dbReference type="OpenTargets" id="ENSG00000149782"/>
<dbReference type="Orphanet" id="589435">
    <property type="disease" value="Spondylometaphyseal dysplasia-corneal dystrophy syndrome"/>
</dbReference>
<dbReference type="PharmGKB" id="PA33386"/>
<dbReference type="VEuPathDB" id="HostDB:ENSG00000149782"/>
<dbReference type="eggNOG" id="KOG1265">
    <property type="taxonomic scope" value="Eukaryota"/>
</dbReference>
<dbReference type="GeneTree" id="ENSGT00940000160539"/>
<dbReference type="HOGENOM" id="CLU_002738_2_0_1"/>
<dbReference type="InParanoid" id="Q01970"/>
<dbReference type="OMA" id="IWSEELF"/>
<dbReference type="OrthoDB" id="269822at2759"/>
<dbReference type="PAN-GO" id="Q01970">
    <property type="GO annotations" value="3 GO annotations based on evolutionary models"/>
</dbReference>
<dbReference type="PhylomeDB" id="Q01970"/>
<dbReference type="TreeFam" id="TF313216"/>
<dbReference type="BRENDA" id="3.1.4.11">
    <property type="organism ID" value="2681"/>
</dbReference>
<dbReference type="PathwayCommons" id="Q01970"/>
<dbReference type="Reactome" id="R-HSA-112043">
    <property type="pathway name" value="PLC beta mediated events"/>
</dbReference>
<dbReference type="Reactome" id="R-HSA-1855204">
    <property type="pathway name" value="Synthesis of IP3 and IP4 in the cytosol"/>
</dbReference>
<dbReference type="Reactome" id="R-HSA-399997">
    <property type="pathway name" value="Acetylcholine regulates insulin secretion"/>
</dbReference>
<dbReference type="Reactome" id="R-HSA-4086398">
    <property type="pathway name" value="Ca2+ pathway"/>
</dbReference>
<dbReference type="Reactome" id="R-HSA-416476">
    <property type="pathway name" value="G alpha (q) signalling events"/>
</dbReference>
<dbReference type="Reactome" id="R-HSA-418217">
    <property type="pathway name" value="G beta:gamma signalling through PLC beta"/>
</dbReference>
<dbReference type="Reactome" id="R-HSA-434316">
    <property type="pathway name" value="Fatty Acids bound to GPR40 (FFAR1) regulate insulin secretion"/>
</dbReference>
<dbReference type="Reactome" id="R-HSA-500657">
    <property type="pathway name" value="Presynaptic function of Kainate receptors"/>
</dbReference>
<dbReference type="SignaLink" id="Q01970"/>
<dbReference type="SIGNOR" id="Q01970"/>
<dbReference type="BioGRID-ORCS" id="5331">
    <property type="hits" value="21 hits in 1158 CRISPR screens"/>
</dbReference>
<dbReference type="ChiTaRS" id="PLCB3">
    <property type="organism name" value="human"/>
</dbReference>
<dbReference type="EvolutionaryTrace" id="Q01970"/>
<dbReference type="GeneWiki" id="PLCB3"/>
<dbReference type="GenomeRNAi" id="5331"/>
<dbReference type="Pharos" id="Q01970">
    <property type="development level" value="Tbio"/>
</dbReference>
<dbReference type="PRO" id="PR:Q01970"/>
<dbReference type="Proteomes" id="UP000005640">
    <property type="component" value="Chromosome 11"/>
</dbReference>
<dbReference type="RNAct" id="Q01970">
    <property type="molecule type" value="protein"/>
</dbReference>
<dbReference type="Bgee" id="ENSG00000149782">
    <property type="expression patterns" value="Expressed in lower esophagus mucosa and 141 other cell types or tissues"/>
</dbReference>
<dbReference type="GO" id="GO:0005737">
    <property type="term" value="C:cytoplasm"/>
    <property type="evidence" value="ECO:0000314"/>
    <property type="project" value="UniProt"/>
</dbReference>
<dbReference type="GO" id="GO:0005829">
    <property type="term" value="C:cytosol"/>
    <property type="evidence" value="ECO:0000304"/>
    <property type="project" value="Reactome"/>
</dbReference>
<dbReference type="GO" id="GO:0016020">
    <property type="term" value="C:membrane"/>
    <property type="evidence" value="ECO:0007669"/>
    <property type="project" value="UniProtKB-SubCell"/>
</dbReference>
<dbReference type="GO" id="GO:0005634">
    <property type="term" value="C:nucleus"/>
    <property type="evidence" value="ECO:0007669"/>
    <property type="project" value="UniProtKB-SubCell"/>
</dbReference>
<dbReference type="GO" id="GO:0099524">
    <property type="term" value="C:postsynaptic cytosol"/>
    <property type="evidence" value="ECO:0000314"/>
    <property type="project" value="UniProt"/>
</dbReference>
<dbReference type="GO" id="GO:0032991">
    <property type="term" value="C:protein-containing complex"/>
    <property type="evidence" value="ECO:0000314"/>
    <property type="project" value="MGI"/>
</dbReference>
<dbReference type="GO" id="GO:0045296">
    <property type="term" value="F:cadherin binding"/>
    <property type="evidence" value="ECO:0007005"/>
    <property type="project" value="BHF-UCL"/>
</dbReference>
<dbReference type="GO" id="GO:0005509">
    <property type="term" value="F:calcium ion binding"/>
    <property type="evidence" value="ECO:0007669"/>
    <property type="project" value="InterPro"/>
</dbReference>
<dbReference type="GO" id="GO:0005516">
    <property type="term" value="F:calmodulin binding"/>
    <property type="evidence" value="ECO:0000314"/>
    <property type="project" value="BHF-UCL"/>
</dbReference>
<dbReference type="GO" id="GO:0060090">
    <property type="term" value="F:molecular adaptor activity"/>
    <property type="evidence" value="ECO:0000314"/>
    <property type="project" value="DisProt"/>
</dbReference>
<dbReference type="GO" id="GO:0140677">
    <property type="term" value="F:molecular function activator activity"/>
    <property type="evidence" value="ECO:0000269"/>
    <property type="project" value="DisProt"/>
</dbReference>
<dbReference type="GO" id="GO:0004435">
    <property type="term" value="F:phosphatidylinositol-4,5-bisphosphate phospholipase C activity"/>
    <property type="evidence" value="ECO:0000314"/>
    <property type="project" value="UniProtKB"/>
</dbReference>
<dbReference type="GO" id="GO:0004629">
    <property type="term" value="F:phospholipase C activity"/>
    <property type="evidence" value="ECO:0000304"/>
    <property type="project" value="Reactome"/>
</dbReference>
<dbReference type="GO" id="GO:0007186">
    <property type="term" value="P:G protein-coupled receptor signaling pathway"/>
    <property type="evidence" value="ECO:0000318"/>
    <property type="project" value="GO_Central"/>
</dbReference>
<dbReference type="GO" id="GO:0016042">
    <property type="term" value="P:lipid catabolic process"/>
    <property type="evidence" value="ECO:0007669"/>
    <property type="project" value="UniProtKB-KW"/>
</dbReference>
<dbReference type="GO" id="GO:0046488">
    <property type="term" value="P:phosphatidylinositol metabolic process"/>
    <property type="evidence" value="ECO:0000314"/>
    <property type="project" value="UniProtKB"/>
</dbReference>
<dbReference type="GO" id="GO:0048015">
    <property type="term" value="P:phosphatidylinositol-mediated signaling"/>
    <property type="evidence" value="ECO:0000318"/>
    <property type="project" value="GO_Central"/>
</dbReference>
<dbReference type="GO" id="GO:0007200">
    <property type="term" value="P:phospholipase C-activating G protein-coupled receptor signaling pathway"/>
    <property type="evidence" value="ECO:0000314"/>
    <property type="project" value="UniProtKB"/>
</dbReference>
<dbReference type="GO" id="GO:0007208">
    <property type="term" value="P:phospholipase C-activating serotonin receptor signaling pathway"/>
    <property type="evidence" value="ECO:0000314"/>
    <property type="project" value="UniProt"/>
</dbReference>
<dbReference type="GO" id="GO:0003073">
    <property type="term" value="P:regulation of systemic arterial blood pressure"/>
    <property type="evidence" value="ECO:0000314"/>
    <property type="project" value="MGI"/>
</dbReference>
<dbReference type="GO" id="GO:0051209">
    <property type="term" value="P:release of sequestered calcium ion into cytosol"/>
    <property type="evidence" value="ECO:0000318"/>
    <property type="project" value="GO_Central"/>
</dbReference>
<dbReference type="CDD" id="cd00275">
    <property type="entry name" value="C2_PLC_like"/>
    <property type="match status" value="1"/>
</dbReference>
<dbReference type="CDD" id="cd16210">
    <property type="entry name" value="EFh_PI-PLCbeta3"/>
    <property type="match status" value="1"/>
</dbReference>
<dbReference type="CDD" id="cd13361">
    <property type="entry name" value="PH_PLC_beta"/>
    <property type="match status" value="1"/>
</dbReference>
<dbReference type="CDD" id="cd08625">
    <property type="entry name" value="PI-PLCc_beta3"/>
    <property type="match status" value="1"/>
</dbReference>
<dbReference type="DisProt" id="DP02477"/>
<dbReference type="FunFam" id="1.10.238.10:FF:000048">
    <property type="entry name" value="1-phosphatidylinositol 4,5-bisphosphate phosphodiesterase"/>
    <property type="match status" value="1"/>
</dbReference>
<dbReference type="FunFam" id="1.20.1230.10:FF:000003">
    <property type="entry name" value="1-phosphatidylinositol 4,5-bisphosphate phosphodiesterase"/>
    <property type="match status" value="1"/>
</dbReference>
<dbReference type="FunFam" id="2.30.29.240:FF:000005">
    <property type="entry name" value="1-phosphatidylinositol 4,5-bisphosphate phosphodiesterase"/>
    <property type="match status" value="1"/>
</dbReference>
<dbReference type="FunFam" id="2.60.40.150:FF:000008">
    <property type="entry name" value="1-phosphatidylinositol 4,5-bisphosphate phosphodiesterase"/>
    <property type="match status" value="1"/>
</dbReference>
<dbReference type="Gene3D" id="2.30.29.240">
    <property type="match status" value="1"/>
</dbReference>
<dbReference type="Gene3D" id="2.60.40.150">
    <property type="entry name" value="C2 domain"/>
    <property type="match status" value="1"/>
</dbReference>
<dbReference type="Gene3D" id="1.10.238.10">
    <property type="entry name" value="EF-hand"/>
    <property type="match status" value="1"/>
</dbReference>
<dbReference type="Gene3D" id="3.20.20.190">
    <property type="entry name" value="Phosphatidylinositol (PI) phosphodiesterase"/>
    <property type="match status" value="1"/>
</dbReference>
<dbReference type="Gene3D" id="1.20.1230.10">
    <property type="entry name" value="Phospholipase C beta, distal C-terminal domain"/>
    <property type="match status" value="1"/>
</dbReference>
<dbReference type="InterPro" id="IPR000008">
    <property type="entry name" value="C2_dom"/>
</dbReference>
<dbReference type="InterPro" id="IPR035892">
    <property type="entry name" value="C2_domain_sf"/>
</dbReference>
<dbReference type="InterPro" id="IPR011992">
    <property type="entry name" value="EF-hand-dom_pair"/>
</dbReference>
<dbReference type="InterPro" id="IPR001192">
    <property type="entry name" value="PI-PLC_fam"/>
</dbReference>
<dbReference type="InterPro" id="IPR016280">
    <property type="entry name" value="PLC-beta"/>
</dbReference>
<dbReference type="InterPro" id="IPR014815">
    <property type="entry name" value="PLC-beta_C"/>
</dbReference>
<dbReference type="InterPro" id="IPR042531">
    <property type="entry name" value="PLC-beta_C_sf"/>
</dbReference>
<dbReference type="InterPro" id="IPR037862">
    <property type="entry name" value="PLC-beta_PH"/>
</dbReference>
<dbReference type="InterPro" id="IPR017946">
    <property type="entry name" value="PLC-like_Pdiesterase_TIM-brl"/>
</dbReference>
<dbReference type="InterPro" id="IPR053945">
    <property type="entry name" value="PLCB1-4-like_EFh"/>
</dbReference>
<dbReference type="InterPro" id="IPR000909">
    <property type="entry name" value="PLipase_C_PInositol-sp_X_dom"/>
</dbReference>
<dbReference type="InterPro" id="IPR001711">
    <property type="entry name" value="PLipase_C_Pinositol-sp_Y"/>
</dbReference>
<dbReference type="PANTHER" id="PTHR10336:SF11">
    <property type="entry name" value="1-PHOSPHATIDYLINOSITOL 4,5-BISPHOSPHATE PHOSPHODIESTERASE BETA-3"/>
    <property type="match status" value="1"/>
</dbReference>
<dbReference type="PANTHER" id="PTHR10336">
    <property type="entry name" value="PHOSPHOINOSITIDE-SPECIFIC PHOSPHOLIPASE C FAMILY PROTEIN"/>
    <property type="match status" value="1"/>
</dbReference>
<dbReference type="Pfam" id="PF00168">
    <property type="entry name" value="C2"/>
    <property type="match status" value="1"/>
</dbReference>
<dbReference type="Pfam" id="PF17787">
    <property type="entry name" value="PH_14"/>
    <property type="match status" value="1"/>
</dbReference>
<dbReference type="Pfam" id="PF00388">
    <property type="entry name" value="PI-PLC-X"/>
    <property type="match status" value="1"/>
</dbReference>
<dbReference type="Pfam" id="PF00387">
    <property type="entry name" value="PI-PLC-Y"/>
    <property type="match status" value="1"/>
</dbReference>
<dbReference type="Pfam" id="PF08703">
    <property type="entry name" value="PLC-beta_C"/>
    <property type="match status" value="1"/>
</dbReference>
<dbReference type="Pfam" id="PF22631">
    <property type="entry name" value="PLCB1-4-like_EFh"/>
    <property type="match status" value="1"/>
</dbReference>
<dbReference type="PIRSF" id="PIRSF000956">
    <property type="entry name" value="PLC-beta"/>
    <property type="match status" value="1"/>
</dbReference>
<dbReference type="PRINTS" id="PR00390">
    <property type="entry name" value="PHPHLIPASEC"/>
</dbReference>
<dbReference type="SMART" id="SM00239">
    <property type="entry name" value="C2"/>
    <property type="match status" value="1"/>
</dbReference>
<dbReference type="SMART" id="SM00148">
    <property type="entry name" value="PLCXc"/>
    <property type="match status" value="1"/>
</dbReference>
<dbReference type="SMART" id="SM00149">
    <property type="entry name" value="PLCYc"/>
    <property type="match status" value="1"/>
</dbReference>
<dbReference type="SUPFAM" id="SSF69989">
    <property type="entry name" value="C-terminal domain of PLC-beta"/>
    <property type="match status" value="1"/>
</dbReference>
<dbReference type="SUPFAM" id="SSF49562">
    <property type="entry name" value="C2 domain (Calcium/lipid-binding domain, CaLB)"/>
    <property type="match status" value="1"/>
</dbReference>
<dbReference type="SUPFAM" id="SSF47473">
    <property type="entry name" value="EF-hand"/>
    <property type="match status" value="1"/>
</dbReference>
<dbReference type="SUPFAM" id="SSF50729">
    <property type="entry name" value="PH domain-like"/>
    <property type="match status" value="1"/>
</dbReference>
<dbReference type="SUPFAM" id="SSF51695">
    <property type="entry name" value="PLC-like phosphodiesterases"/>
    <property type="match status" value="1"/>
</dbReference>
<dbReference type="PROSITE" id="PS50004">
    <property type="entry name" value="C2"/>
    <property type="match status" value="1"/>
</dbReference>
<dbReference type="PROSITE" id="PS50007">
    <property type="entry name" value="PIPLC_X_DOMAIN"/>
    <property type="match status" value="1"/>
</dbReference>
<dbReference type="PROSITE" id="PS50008">
    <property type="entry name" value="PIPLC_Y_DOMAIN"/>
    <property type="match status" value="1"/>
</dbReference>
<reference key="1">
    <citation type="journal article" date="1995" name="Biochem. Biophys. Res. Commun.">
        <title>Structural organization and expression of the human phosphatidylinositol-specific phospholipase C beta-3 gene.</title>
        <authorList>
            <person name="Mazuruk K."/>
            <person name="Schoen T.J."/>
            <person name="Chader G.J."/>
            <person name="Rodriguez I.R."/>
        </authorList>
    </citation>
    <scope>NUCLEOTIDE SEQUENCE [GENOMIC DNA]</scope>
</reference>
<reference key="2">
    <citation type="journal article" date="1995" name="Genomics">
        <title>Genomic organization and complete cDNA sequence of the human phosphoinositide-specific phospholipase C beta 3 gene (PLCB3).</title>
        <authorList>
            <person name="Lagercrantz J."/>
            <person name="Carson E."/>
            <person name="Phelan C."/>
            <person name="Grimmond S."/>
            <person name="Rosen A."/>
            <person name="Dare E."/>
            <person name="Nordenskjoeld M."/>
            <person name="Hayward N.K."/>
            <person name="Larsson C."/>
            <person name="Weber G."/>
        </authorList>
    </citation>
    <scope>NUCLEOTIDE SEQUENCE [GENOMIC DNA]</scope>
</reference>
<reference key="3">
    <citation type="journal article" date="2006" name="Nature">
        <title>Human chromosome 11 DNA sequence and analysis including novel gene identification.</title>
        <authorList>
            <person name="Taylor T.D."/>
            <person name="Noguchi H."/>
            <person name="Totoki Y."/>
            <person name="Toyoda A."/>
            <person name="Kuroki Y."/>
            <person name="Dewar K."/>
            <person name="Lloyd C."/>
            <person name="Itoh T."/>
            <person name="Takeda T."/>
            <person name="Kim D.-W."/>
            <person name="She X."/>
            <person name="Barlow K.F."/>
            <person name="Bloom T."/>
            <person name="Bruford E."/>
            <person name="Chang J.L."/>
            <person name="Cuomo C.A."/>
            <person name="Eichler E."/>
            <person name="FitzGerald M.G."/>
            <person name="Jaffe D.B."/>
            <person name="LaButti K."/>
            <person name="Nicol R."/>
            <person name="Park H.-S."/>
            <person name="Seaman C."/>
            <person name="Sougnez C."/>
            <person name="Yang X."/>
            <person name="Zimmer A.R."/>
            <person name="Zody M.C."/>
            <person name="Birren B.W."/>
            <person name="Nusbaum C."/>
            <person name="Fujiyama A."/>
            <person name="Hattori M."/>
            <person name="Rogers J."/>
            <person name="Lander E.S."/>
            <person name="Sakaki Y."/>
        </authorList>
    </citation>
    <scope>NUCLEOTIDE SEQUENCE [LARGE SCALE GENOMIC DNA]</scope>
</reference>
<reference key="4">
    <citation type="submission" date="2005-07" db="EMBL/GenBank/DDBJ databases">
        <authorList>
            <person name="Mural R.J."/>
            <person name="Istrail S."/>
            <person name="Sutton G.G."/>
            <person name="Florea L."/>
            <person name="Halpern A.L."/>
            <person name="Mobarry C.M."/>
            <person name="Lippert R."/>
            <person name="Walenz B."/>
            <person name="Shatkay H."/>
            <person name="Dew I."/>
            <person name="Miller J.R."/>
            <person name="Flanigan M.J."/>
            <person name="Edwards N.J."/>
            <person name="Bolanos R."/>
            <person name="Fasulo D."/>
            <person name="Halldorsson B.V."/>
            <person name="Hannenhalli S."/>
            <person name="Turner R."/>
            <person name="Yooseph S."/>
            <person name="Lu F."/>
            <person name="Nusskern D.R."/>
            <person name="Shue B.C."/>
            <person name="Zheng X.H."/>
            <person name="Zhong F."/>
            <person name="Delcher A.L."/>
            <person name="Huson D.H."/>
            <person name="Kravitz S.A."/>
            <person name="Mouchard L."/>
            <person name="Reinert K."/>
            <person name="Remington K.A."/>
            <person name="Clark A.G."/>
            <person name="Waterman M.S."/>
            <person name="Eichler E.E."/>
            <person name="Adams M.D."/>
            <person name="Hunkapiller M.W."/>
            <person name="Myers E.W."/>
            <person name="Venter J.C."/>
        </authorList>
    </citation>
    <scope>NUCLEOTIDE SEQUENCE [LARGE SCALE GENOMIC DNA]</scope>
</reference>
<reference key="5">
    <citation type="journal article" date="2004" name="Genome Res.">
        <title>The status, quality, and expansion of the NIH full-length cDNA project: the Mammalian Gene Collection (MGC).</title>
        <authorList>
            <consortium name="The MGC Project Team"/>
        </authorList>
    </citation>
    <scope>NUCLEOTIDE SEQUENCE [LARGE SCALE MRNA] (ISOFORMS 1 AND 2)</scope>
    <source>
        <tissue>Uterus</tissue>
    </source>
</reference>
<reference key="6">
    <citation type="journal article" date="1992" name="Eur. J. Biochem.">
        <title>Identification, purification and characterization of a novel phosphatidylinositol-specific phospholipase C, a third member of the beta subfamily.</title>
        <authorList>
            <person name="Carozzi A.J."/>
            <person name="Kriz R.W."/>
            <person name="Webster C."/>
            <person name="Parker P.J."/>
        </authorList>
    </citation>
    <scope>NUCLEOTIDE SEQUENCE [MRNA] OF 184-1234 (ISOFORM 1/2)</scope>
</reference>
<reference key="7">
    <citation type="journal article" date="1997" name="Biochemistry">
        <title>Phosphoinositide binding specificity among phospholipase C isozymes as determined by photo-cross-linking to novel substrate and product analogs.</title>
        <authorList>
            <person name="Tall E."/>
            <person name="Dorman G."/>
            <person name="Garcia P."/>
            <person name="Runnels L."/>
            <person name="Shah S."/>
            <person name="Chen J."/>
            <person name="Profit A."/>
            <person name="Gu Q.M."/>
            <person name="Chaudhary A."/>
            <person name="Prestwich G.D."/>
            <person name="Rebecchi M.J."/>
        </authorList>
    </citation>
    <scope>FUNCTION</scope>
    <scope>CATALYTIC ACTIVITY</scope>
</reference>
<reference key="8">
    <citation type="journal article" date="2004" name="Mol. Cell. Biol.">
        <title>NHERF2 specifically interacts with LPA2 receptor and defines the specificity and efficiency of receptor-mediated phospholipase C-beta3 activation.</title>
        <authorList>
            <person name="Oh Y.-S."/>
            <person name="Jo N.W."/>
            <person name="Choi J.W."/>
            <person name="Kim H.S."/>
            <person name="Seo S.-W."/>
            <person name="Kang K.-O."/>
            <person name="Hwang J.-I."/>
            <person name="Heo K."/>
            <person name="Kim S.-H."/>
            <person name="Kim Y.-H."/>
            <person name="Kim I.-H."/>
            <person name="Kim J.H."/>
            <person name="Banno Y."/>
            <person name="Ryu S.H."/>
            <person name="Suh P.-G."/>
        </authorList>
    </citation>
    <scope>INTERACTION WITH LPAR2</scope>
</reference>
<reference key="9">
    <citation type="journal article" date="2008" name="Proc. Natl. Acad. Sci. U.S.A.">
        <title>A quantitative atlas of mitotic phosphorylation.</title>
        <authorList>
            <person name="Dephoure N."/>
            <person name="Zhou C."/>
            <person name="Villen J."/>
            <person name="Beausoleil S.A."/>
            <person name="Bakalarski C.E."/>
            <person name="Elledge S.J."/>
            <person name="Gygi S.P."/>
        </authorList>
    </citation>
    <scope>IDENTIFICATION BY MASS SPECTROMETRY [LARGE SCALE ANALYSIS]</scope>
    <source>
        <tissue>Cervix carcinoma</tissue>
    </source>
</reference>
<reference key="10">
    <citation type="journal article" date="2010" name="Sci. Signal.">
        <title>Quantitative phosphoproteomics reveals widespread full phosphorylation site occupancy during mitosis.</title>
        <authorList>
            <person name="Olsen J.V."/>
            <person name="Vermeulen M."/>
            <person name="Santamaria A."/>
            <person name="Kumar C."/>
            <person name="Miller M.L."/>
            <person name="Jensen L.J."/>
            <person name="Gnad F."/>
            <person name="Cox J."/>
            <person name="Jensen T.S."/>
            <person name="Nigg E.A."/>
            <person name="Brunak S."/>
            <person name="Mann M."/>
        </authorList>
    </citation>
    <scope>PHOSPHORYLATION [LARGE SCALE ANALYSIS] AT SER-537</scope>
    <scope>IDENTIFICATION BY MASS SPECTROMETRY [LARGE SCALE ANALYSIS]</scope>
    <source>
        <tissue>Cervix carcinoma</tissue>
    </source>
</reference>
<reference key="11">
    <citation type="journal article" date="2011" name="BMC Syst. Biol.">
        <title>Initial characterization of the human central proteome.</title>
        <authorList>
            <person name="Burkard T.R."/>
            <person name="Planyavsky M."/>
            <person name="Kaupe I."/>
            <person name="Breitwieser F.P."/>
            <person name="Buerckstuemmer T."/>
            <person name="Bennett K.L."/>
            <person name="Superti-Furga G."/>
            <person name="Colinge J."/>
        </authorList>
    </citation>
    <scope>IDENTIFICATION BY MASS SPECTROMETRY [LARGE SCALE ANALYSIS]</scope>
</reference>
<reference key="12">
    <citation type="journal article" date="2011" name="Sci. Signal.">
        <title>System-wide temporal characterization of the proteome and phosphoproteome of human embryonic stem cell differentiation.</title>
        <authorList>
            <person name="Rigbolt K.T."/>
            <person name="Prokhorova T.A."/>
            <person name="Akimov V."/>
            <person name="Henningsen J."/>
            <person name="Johansen P.T."/>
            <person name="Kratchmarova I."/>
            <person name="Kassem M."/>
            <person name="Mann M."/>
            <person name="Olsen J.V."/>
            <person name="Blagoev B."/>
        </authorList>
    </citation>
    <scope>PHOSPHORYLATION [LARGE SCALE ANALYSIS] AT SER-474; SER-537 AND SER-1105</scope>
    <scope>IDENTIFICATION BY MASS SPECTROMETRY [LARGE SCALE ANALYSIS]</scope>
</reference>
<reference key="13">
    <citation type="journal article" date="2012" name="Mol. Cell. Proteomics">
        <title>Comparative large-scale characterisation of plant vs. mammal proteins reveals similar and idiosyncratic N-alpha acetylation features.</title>
        <authorList>
            <person name="Bienvenut W.V."/>
            <person name="Sumpton D."/>
            <person name="Martinez A."/>
            <person name="Lilla S."/>
            <person name="Espagne C."/>
            <person name="Meinnel T."/>
            <person name="Giglione C."/>
        </authorList>
    </citation>
    <scope>ACETYLATION [LARGE SCALE ANALYSIS] AT ALA-2</scope>
    <scope>CLEAVAGE OF INITIATOR METHIONINE [LARGE SCALE ANALYSIS]</scope>
    <scope>IDENTIFICATION BY MASS SPECTROMETRY [LARGE SCALE ANALYSIS]</scope>
</reference>
<reference key="14">
    <citation type="journal article" date="2013" name="J. Proteome Res.">
        <title>Toward a comprehensive characterization of a human cancer cell phosphoproteome.</title>
        <authorList>
            <person name="Zhou H."/>
            <person name="Di Palma S."/>
            <person name="Preisinger C."/>
            <person name="Peng M."/>
            <person name="Polat A.N."/>
            <person name="Heck A.J."/>
            <person name="Mohammed S."/>
        </authorList>
    </citation>
    <scope>PHOSPHORYLATION [LARGE SCALE ANALYSIS] AT SER-537 AND SER-926</scope>
    <scope>IDENTIFICATION BY MASS SPECTROMETRY [LARGE SCALE ANALYSIS]</scope>
    <source>
        <tissue>Cervix carcinoma</tissue>
        <tissue>Erythroleukemia</tissue>
    </source>
</reference>
<reference key="15">
    <citation type="journal article" date="2014" name="J. Proteomics">
        <title>An enzyme assisted RP-RPLC approach for in-depth analysis of human liver phosphoproteome.</title>
        <authorList>
            <person name="Bian Y."/>
            <person name="Song C."/>
            <person name="Cheng K."/>
            <person name="Dong M."/>
            <person name="Wang F."/>
            <person name="Huang J."/>
            <person name="Sun D."/>
            <person name="Wang L."/>
            <person name="Ye M."/>
            <person name="Zou H."/>
        </authorList>
    </citation>
    <scope>PHOSPHORYLATION [LARGE SCALE ANALYSIS] AT SER-490; SER-495 AND SER-537</scope>
    <scope>IDENTIFICATION BY MASS SPECTROMETRY [LARGE SCALE ANALYSIS]</scope>
    <source>
        <tissue>Liver</tissue>
    </source>
</reference>
<reference key="16">
    <citation type="journal article" date="2015" name="Proteomics">
        <title>N-terminome analysis of the human mitochondrial proteome.</title>
        <authorList>
            <person name="Vaca Jacome A.S."/>
            <person name="Rabilloud T."/>
            <person name="Schaeffer-Reiss C."/>
            <person name="Rompais M."/>
            <person name="Ayoub D."/>
            <person name="Lane L."/>
            <person name="Bairoch A."/>
            <person name="Van Dorsselaer A."/>
            <person name="Carapito C."/>
        </authorList>
    </citation>
    <scope>IDENTIFICATION BY MASS SPECTROMETRY [LARGE SCALE ANALYSIS]</scope>
</reference>
<reference key="17">
    <citation type="journal article" date="2018" name="J. Med. Genet.">
        <title>Defect in phosphoinositide signalling through a homozygous variant in PLCB3 causes a new form of spondylometaphyseal dysplasia with corneal dystrophy.</title>
        <authorList>
            <person name="Ben-Salem S."/>
            <person name="Robbins S.M."/>
            <person name="Lm Sobreira N."/>
            <person name="Lyon A."/>
            <person name="Al-Shamsi A.M."/>
            <person name="Islam B.K."/>
            <person name="Akawi N.A."/>
            <person name="John A."/>
            <person name="Thachillath P."/>
            <person name="Al Hamed S."/>
            <person name="Valle D."/>
            <person name="Ali B.R."/>
            <person name="Al-Gazali L."/>
        </authorList>
    </citation>
    <scope>INVOLVEMENT IN SMDCD</scope>
    <scope>VARIANT SMDCD SER-878</scope>
    <scope>CHARACTERIZATION OF VARIANT SMDCD SER-878</scope>
    <scope>FUNCTION</scope>
    <scope>SUBCELLULAR LOCATION</scope>
</reference>
<reference evidence="20" key="18">
    <citation type="journal article" date="2010" name="Science">
        <title>Kinetic scaffolding mediated by a phospholipase C-beta and Gq signaling complex.</title>
        <authorList>
            <person name="Waldo G.L."/>
            <person name="Ricks T.K."/>
            <person name="Hicks S.N."/>
            <person name="Cheever M.L."/>
            <person name="Kawano T."/>
            <person name="Tsuboi K."/>
            <person name="Wang X."/>
            <person name="Montell C."/>
            <person name="Kozasa T."/>
            <person name="Sondek J."/>
            <person name="Harden T.K."/>
        </authorList>
    </citation>
    <scope>X-RAY CRYSTALLOGRAPHY (2.6 ANGSTROMS) OF 35-359 IN COMPLEX WITH GNAQ</scope>
    <scope>FUNCTION</scope>
    <scope>CATALYTIC ACTIVITY</scope>
    <scope>ACTIVITY REGULATION</scope>
    <scope>MUTAGENESIS OF ARG-258; ASN-260; TYR-855; LEU-859; ASN-861; PRO-862 AND ILE-863</scope>
</reference>
<reference evidence="21 22" key="19">
    <citation type="journal article" date="2023" name="Proc. Natl. Acad. Sci. U.S.A.">
        <title>The mechanism of Galphaq regulation of PLCbeta3-catalyzed PIP2 hydrolysis.</title>
        <authorList>
            <person name="Falzone M.E."/>
            <person name="MacKinnon R."/>
        </authorList>
    </citation>
    <scope>STRUCTURE BY ELECTRON MICROSCOPY (3.37 ANGSTROMS) OF 7-359 IN COMPLEX WITH GNAQ AND GNB1</scope>
    <scope>FUNCTION</scope>
    <scope>CATALYTIC ACTIVITY</scope>
    <scope>ACTIVITY REGULATION</scope>
</reference>
<accession>Q01970</accession>
<accession>A5PKZ6</accession>
<accession>G5E960</accession>
<accession>Q8N1A4</accession>
<gene>
    <name evidence="14 19" type="primary">PLCB3</name>
</gene>
<organism>
    <name type="scientific">Homo sapiens</name>
    <name type="common">Human</name>
    <dbReference type="NCBI Taxonomy" id="9606"/>
    <lineage>
        <taxon>Eukaryota</taxon>
        <taxon>Metazoa</taxon>
        <taxon>Chordata</taxon>
        <taxon>Craniata</taxon>
        <taxon>Vertebrata</taxon>
        <taxon>Euteleostomi</taxon>
        <taxon>Mammalia</taxon>
        <taxon>Eutheria</taxon>
        <taxon>Euarchontoglires</taxon>
        <taxon>Primates</taxon>
        <taxon>Haplorrhini</taxon>
        <taxon>Catarrhini</taxon>
        <taxon>Hominidae</taxon>
        <taxon>Homo</taxon>
    </lineage>
</organism>